<dbReference type="EMBL" id="AK303014">
    <property type="protein sequence ID" value="BAH13878.1"/>
    <property type="molecule type" value="mRNA"/>
</dbReference>
<dbReference type="EMBL" id="AL832003">
    <property type="protein sequence ID" value="CAD89905.1"/>
    <property type="molecule type" value="mRNA"/>
</dbReference>
<dbReference type="EMBL" id="AL832496">
    <property type="protein sequence ID" value="CAD91165.1"/>
    <property type="molecule type" value="mRNA"/>
</dbReference>
<dbReference type="EMBL" id="CH471066">
    <property type="protein sequence ID" value="EAW50112.1"/>
    <property type="molecule type" value="Genomic_DNA"/>
</dbReference>
<dbReference type="EMBL" id="CH471066">
    <property type="protein sequence ID" value="EAW50113.1"/>
    <property type="molecule type" value="Genomic_DNA"/>
</dbReference>
<dbReference type="EMBL" id="BC007377">
    <property type="protein sequence ID" value="AAH07377.1"/>
    <property type="molecule type" value="mRNA"/>
</dbReference>
<dbReference type="EMBL" id="BC051845">
    <property type="protein sequence ID" value="AAH51845.1"/>
    <property type="molecule type" value="mRNA"/>
</dbReference>
<dbReference type="CCDS" id="CCDS7413.1">
    <molecule id="Q86SE9-1"/>
</dbReference>
<dbReference type="RefSeq" id="NP_001243478.1">
    <molecule id="Q86SE9-1"/>
    <property type="nucleotide sequence ID" value="NM_001256549.2"/>
</dbReference>
<dbReference type="RefSeq" id="NP_001244030.1">
    <molecule id="Q86SE9-1"/>
    <property type="nucleotide sequence ID" value="NM_001257101.2"/>
</dbReference>
<dbReference type="RefSeq" id="NP_115749.2">
    <molecule id="Q86SE9-1"/>
    <property type="nucleotide sequence ID" value="NM_032373.4"/>
</dbReference>
<dbReference type="RefSeq" id="XP_011538573.1">
    <molecule id="Q86SE9-1"/>
    <property type="nucleotide sequence ID" value="XM_011540271.4"/>
</dbReference>
<dbReference type="RefSeq" id="XP_016872265.1">
    <molecule id="Q86SE9-1"/>
    <property type="nucleotide sequence ID" value="XM_017016776.3"/>
</dbReference>
<dbReference type="RefSeq" id="XP_054222908.1">
    <molecule id="Q86SE9-1"/>
    <property type="nucleotide sequence ID" value="XM_054366933.1"/>
</dbReference>
<dbReference type="RefSeq" id="XP_054222909.1">
    <molecule id="Q86SE9-1"/>
    <property type="nucleotide sequence ID" value="XM_054366934.1"/>
</dbReference>
<dbReference type="PDB" id="4S3O">
    <property type="method" value="X-ray"/>
    <property type="resolution" value="2.00 A"/>
    <property type="chains" value="C/F=1-109"/>
</dbReference>
<dbReference type="PDBsum" id="4S3O"/>
<dbReference type="SMR" id="Q86SE9"/>
<dbReference type="BioGRID" id="124057">
    <property type="interactions" value="108"/>
</dbReference>
<dbReference type="ComplexPortal" id="CPX-7581">
    <property type="entry name" value="Non-canonical polycomb repressive complex 1.5, RING1-RYBP-CKIIA2 variant"/>
</dbReference>
<dbReference type="ComplexPortal" id="CPX-7582">
    <property type="entry name" value="Non-canonical polycomb repressive complex 1.5, RING1-RYBP-CKIIA1-A2 variant"/>
</dbReference>
<dbReference type="ComplexPortal" id="CPX-7583">
    <property type="entry name" value="Non-canonical polycomb repressive complex 1.5, RING1-RYBP-CKIIA1 variant"/>
</dbReference>
<dbReference type="ComplexPortal" id="CPX-7584">
    <property type="entry name" value="Non-canonical polycomb repressive complex 1.5, RING1-YAF2-CKIIA2 variant"/>
</dbReference>
<dbReference type="ComplexPortal" id="CPX-7585">
    <property type="entry name" value="Non-canonical polycomb repressive complex 1.5, RING1-YAF2-CKIIA1-A2 variant"/>
</dbReference>
<dbReference type="ComplexPortal" id="CPX-7586">
    <property type="entry name" value="Non-canonical polycomb repressive complex 1.5, RING1-YAF2-CKIIA1 variant"/>
</dbReference>
<dbReference type="ComplexPortal" id="CPX-7587">
    <property type="entry name" value="Non-canonical polycomb repressive complex 1.5, RING2-RYBP-CKIIA2 variant"/>
</dbReference>
<dbReference type="ComplexPortal" id="CPX-7588">
    <property type="entry name" value="Non-canonical polycomb repressive complex 1.5, RING2-RYBP-CKIIA1-A2 variant"/>
</dbReference>
<dbReference type="ComplexPortal" id="CPX-7589">
    <property type="entry name" value="Non-canonical polycomb repressive complex 1.5, RING2-RYBP-CKIIA1 variant"/>
</dbReference>
<dbReference type="ComplexPortal" id="CPX-7590">
    <property type="entry name" value="Non-canonical polycomb repressive complex 1.5, RING2-YAF2-CKIIA2 variant"/>
</dbReference>
<dbReference type="ComplexPortal" id="CPX-7591">
    <property type="entry name" value="Non-canonical polycomb repressive complex 1.5, RING2-YAF2-CKIIA1-A2 variant"/>
</dbReference>
<dbReference type="ComplexPortal" id="CPX-7592">
    <property type="entry name" value="Non-canonical polycomb repressive complex 1.5, RING2-YAF2-CKIIA1 variant"/>
</dbReference>
<dbReference type="CORUM" id="Q86SE9"/>
<dbReference type="DIP" id="DIP-61356N"/>
<dbReference type="FunCoup" id="Q86SE9">
    <property type="interactions" value="1496"/>
</dbReference>
<dbReference type="IntAct" id="Q86SE9">
    <property type="interactions" value="67"/>
</dbReference>
<dbReference type="MINT" id="Q86SE9"/>
<dbReference type="STRING" id="9606.ENSP00000337500"/>
<dbReference type="GlyGen" id="Q86SE9">
    <property type="glycosylation" value="1 site"/>
</dbReference>
<dbReference type="PhosphoSitePlus" id="Q86SE9"/>
<dbReference type="BioMuta" id="PCGF5"/>
<dbReference type="DMDM" id="74750353"/>
<dbReference type="jPOST" id="Q86SE9"/>
<dbReference type="MassIVE" id="Q86SE9"/>
<dbReference type="PaxDb" id="9606-ENSP00000445704"/>
<dbReference type="PeptideAtlas" id="Q86SE9"/>
<dbReference type="ProteomicsDB" id="69577">
    <molecule id="Q86SE9-1"/>
</dbReference>
<dbReference type="ProteomicsDB" id="69578">
    <molecule id="Q86SE9-2"/>
</dbReference>
<dbReference type="Pumba" id="Q86SE9"/>
<dbReference type="Antibodypedia" id="30344">
    <property type="antibodies" value="41 antibodies from 15 providers"/>
</dbReference>
<dbReference type="DNASU" id="84333"/>
<dbReference type="Ensembl" id="ENST00000336126.6">
    <molecule id="Q86SE9-1"/>
    <property type="protein sequence ID" value="ENSP00000337500.5"/>
    <property type="gene ID" value="ENSG00000180628.15"/>
</dbReference>
<dbReference type="Ensembl" id="ENST00000543648.5">
    <molecule id="Q86SE9-1"/>
    <property type="protein sequence ID" value="ENSP00000445704.1"/>
    <property type="gene ID" value="ENSG00000180628.15"/>
</dbReference>
<dbReference type="Ensembl" id="ENST00000614189.4">
    <molecule id="Q86SE9-1"/>
    <property type="protein sequence ID" value="ENSP00000479492.1"/>
    <property type="gene ID" value="ENSG00000180628.15"/>
</dbReference>
<dbReference type="GeneID" id="84333"/>
<dbReference type="KEGG" id="hsa:84333"/>
<dbReference type="MANE-Select" id="ENST00000336126.6">
    <property type="protein sequence ID" value="ENSP00000337500.5"/>
    <property type="RefSeq nucleotide sequence ID" value="NM_032373.5"/>
    <property type="RefSeq protein sequence ID" value="NP_115749.2"/>
</dbReference>
<dbReference type="UCSC" id="uc001khh.5">
    <molecule id="Q86SE9-1"/>
    <property type="organism name" value="human"/>
</dbReference>
<dbReference type="AGR" id="HGNC:28264"/>
<dbReference type="CTD" id="84333"/>
<dbReference type="DisGeNET" id="84333"/>
<dbReference type="GeneCards" id="PCGF5"/>
<dbReference type="HGNC" id="HGNC:28264">
    <property type="gene designation" value="PCGF5"/>
</dbReference>
<dbReference type="HPA" id="ENSG00000180628">
    <property type="expression patterns" value="Low tissue specificity"/>
</dbReference>
<dbReference type="MIM" id="617407">
    <property type="type" value="gene"/>
</dbReference>
<dbReference type="neXtProt" id="NX_Q86SE9"/>
<dbReference type="OpenTargets" id="ENSG00000180628"/>
<dbReference type="PharmGKB" id="PA134929149"/>
<dbReference type="VEuPathDB" id="HostDB:ENSG00000180628"/>
<dbReference type="eggNOG" id="KOG2660">
    <property type="taxonomic scope" value="Eukaryota"/>
</dbReference>
<dbReference type="GeneTree" id="ENSGT00940000155896"/>
<dbReference type="HOGENOM" id="CLU_046427_4_1_1"/>
<dbReference type="InParanoid" id="Q86SE9"/>
<dbReference type="OMA" id="GENGYPM"/>
<dbReference type="OrthoDB" id="1305878at2759"/>
<dbReference type="PAN-GO" id="Q86SE9">
    <property type="GO annotations" value="4 GO annotations based on evolutionary models"/>
</dbReference>
<dbReference type="PhylomeDB" id="Q86SE9"/>
<dbReference type="TreeFam" id="TF324206"/>
<dbReference type="PathwayCommons" id="Q86SE9"/>
<dbReference type="Reactome" id="R-HSA-8939243">
    <property type="pathway name" value="RUNX1 interacts with co-factors whose precise effect on RUNX1 targets is not known"/>
</dbReference>
<dbReference type="SignaLink" id="Q86SE9"/>
<dbReference type="SIGNOR" id="Q86SE9"/>
<dbReference type="BioGRID-ORCS" id="84333">
    <property type="hits" value="15 hits in 1197 CRISPR screens"/>
</dbReference>
<dbReference type="ChiTaRS" id="PCGF5">
    <property type="organism name" value="human"/>
</dbReference>
<dbReference type="EvolutionaryTrace" id="Q86SE9"/>
<dbReference type="GeneWiki" id="PCGF5"/>
<dbReference type="GenomeRNAi" id="84333"/>
<dbReference type="Pharos" id="Q86SE9">
    <property type="development level" value="Tdark"/>
</dbReference>
<dbReference type="PRO" id="PR:Q86SE9"/>
<dbReference type="Proteomes" id="UP000005640">
    <property type="component" value="Chromosome 10"/>
</dbReference>
<dbReference type="RNAct" id="Q86SE9">
    <property type="molecule type" value="protein"/>
</dbReference>
<dbReference type="Bgee" id="ENSG00000180628">
    <property type="expression patterns" value="Expressed in cardiac muscle of right atrium and 195 other cell types or tissues"/>
</dbReference>
<dbReference type="GO" id="GO:0005813">
    <property type="term" value="C:centrosome"/>
    <property type="evidence" value="ECO:0000314"/>
    <property type="project" value="LIFEdb"/>
</dbReference>
<dbReference type="GO" id="GO:0005794">
    <property type="term" value="C:Golgi apparatus"/>
    <property type="evidence" value="ECO:0000314"/>
    <property type="project" value="HPA"/>
</dbReference>
<dbReference type="GO" id="GO:0005654">
    <property type="term" value="C:nucleoplasm"/>
    <property type="evidence" value="ECO:0000314"/>
    <property type="project" value="HPA"/>
</dbReference>
<dbReference type="GO" id="GO:0005634">
    <property type="term" value="C:nucleus"/>
    <property type="evidence" value="ECO:0000314"/>
    <property type="project" value="UniProtKB"/>
</dbReference>
<dbReference type="GO" id="GO:0031519">
    <property type="term" value="C:PcG protein complex"/>
    <property type="evidence" value="ECO:0000314"/>
    <property type="project" value="UniProtKB"/>
</dbReference>
<dbReference type="GO" id="GO:0035102">
    <property type="term" value="C:PRC1 complex"/>
    <property type="evidence" value="ECO:0000318"/>
    <property type="project" value="GO_Central"/>
</dbReference>
<dbReference type="GO" id="GO:0000805">
    <property type="term" value="C:X chromosome"/>
    <property type="evidence" value="ECO:0007669"/>
    <property type="project" value="Ensembl"/>
</dbReference>
<dbReference type="GO" id="GO:0140862">
    <property type="term" value="F:histone H2AK119 ubiquitin ligase activity"/>
    <property type="evidence" value="ECO:0000250"/>
    <property type="project" value="UniProtKB"/>
</dbReference>
<dbReference type="GO" id="GO:0008270">
    <property type="term" value="F:zinc ion binding"/>
    <property type="evidence" value="ECO:0007669"/>
    <property type="project" value="UniProtKB-KW"/>
</dbReference>
<dbReference type="GO" id="GO:0045944">
    <property type="term" value="P:positive regulation of transcription by RNA polymerase II"/>
    <property type="evidence" value="ECO:0000314"/>
    <property type="project" value="MGI"/>
</dbReference>
<dbReference type="GO" id="GO:0060816">
    <property type="term" value="P:random inactivation of X chromosome"/>
    <property type="evidence" value="ECO:0000250"/>
    <property type="project" value="UniProtKB"/>
</dbReference>
<dbReference type="GO" id="GO:0006357">
    <property type="term" value="P:regulation of transcription by RNA polymerase II"/>
    <property type="evidence" value="ECO:0000318"/>
    <property type="project" value="GO_Central"/>
</dbReference>
<dbReference type="CDD" id="cd17084">
    <property type="entry name" value="RAWUL_PCGF5"/>
    <property type="match status" value="1"/>
</dbReference>
<dbReference type="CDD" id="cd16737">
    <property type="entry name" value="RING-HC_PCGF5"/>
    <property type="match status" value="1"/>
</dbReference>
<dbReference type="FunFam" id="3.10.20.90:FF:000088">
    <property type="entry name" value="polycomb group RING finger protein 5 isoform X1"/>
    <property type="match status" value="1"/>
</dbReference>
<dbReference type="FunFam" id="3.30.40.10:FF:000118">
    <property type="entry name" value="Putative polycomb group RING finger protein 5"/>
    <property type="match status" value="1"/>
</dbReference>
<dbReference type="Gene3D" id="3.10.20.90">
    <property type="entry name" value="Phosphatidylinositol 3-kinase Catalytic Subunit, Chain A, domain 1"/>
    <property type="match status" value="1"/>
</dbReference>
<dbReference type="Gene3D" id="3.30.40.10">
    <property type="entry name" value="Zinc/RING finger domain, C3HC4 (zinc finger)"/>
    <property type="match status" value="1"/>
</dbReference>
<dbReference type="InterPro" id="IPR051507">
    <property type="entry name" value="PcG_RING_finger"/>
</dbReference>
<dbReference type="InterPro" id="IPR032443">
    <property type="entry name" value="RAWUL"/>
</dbReference>
<dbReference type="InterPro" id="IPR001841">
    <property type="entry name" value="Znf_RING"/>
</dbReference>
<dbReference type="InterPro" id="IPR013083">
    <property type="entry name" value="Znf_RING/FYVE/PHD"/>
</dbReference>
<dbReference type="InterPro" id="IPR017907">
    <property type="entry name" value="Znf_RING_CS"/>
</dbReference>
<dbReference type="PANTHER" id="PTHR45893">
    <property type="entry name" value="POLYCOMB GROUP RING FINGER PROTEIN"/>
    <property type="match status" value="1"/>
</dbReference>
<dbReference type="Pfam" id="PF16207">
    <property type="entry name" value="RAWUL"/>
    <property type="match status" value="1"/>
</dbReference>
<dbReference type="Pfam" id="PF13923">
    <property type="entry name" value="zf-C3HC4_2"/>
    <property type="match status" value="1"/>
</dbReference>
<dbReference type="SMART" id="SM00184">
    <property type="entry name" value="RING"/>
    <property type="match status" value="1"/>
</dbReference>
<dbReference type="SUPFAM" id="SSF57850">
    <property type="entry name" value="RING/U-box"/>
    <property type="match status" value="1"/>
</dbReference>
<dbReference type="PROSITE" id="PS00518">
    <property type="entry name" value="ZF_RING_1"/>
    <property type="match status" value="1"/>
</dbReference>
<dbReference type="PROSITE" id="PS50089">
    <property type="entry name" value="ZF_RING_2"/>
    <property type="match status" value="1"/>
</dbReference>
<sequence length="256" mass="29714">MATQRKHLVKDFNPYITCYICKGYLIKPTTVTECLHTFCKTCIVQHFEDSNDCPRCGNQVHETNPLEMLRLDNTLEEIIFKLVPGLREQELERESEFWKKNKPQENGQDDTSKADKPKVDEEGDENEDDKDYHRSDPQIAICLDCLRNNGQSGDNVVKGLMKKFIRCSTRVTVGTIKKFLSLKLKLPSSYELDVLCNGEIMGKDHTMEFIYMTRWRLRGENFRCLNCSASQVCSQDGPLYQSYPMVLQYRPRIDFG</sequence>
<protein>
    <recommendedName>
        <fullName>Polycomb group RING finger protein 5</fullName>
    </recommendedName>
    <alternativeName>
        <fullName>RING finger protein 159</fullName>
    </alternativeName>
</protein>
<comment type="function">
    <text evidence="1 6">Component of a Polycomb group (PcG) multiprotein PRC1-like complex, a complex class required to maintain the transcriptionally repressive state of many genes, including Hox genes, throughout development. PcG PRC1 complex acts via chromatin remodeling and modification of histones; it mediates monoubiquitination of histone H2A 'Lys-119', rendering chromatin heritably changed in its expressibility (PubMed:26151332). Within the PRC1-like complex, regulates RNF2 ubiquitin ligase activity (PubMed:26151332). Plays a redundant role with PCGF3 as part of a PRC1-like complex that mediates monoubiquitination of histone H2A 'Lys-119' on the X chromosome and is required for normal silencing of one copy of the X chromosome in XX females (By similarity).</text>
</comment>
<comment type="subunit">
    <text evidence="4 5">Component of a PRC1-like complex that contains PCGF5, RNF2 and UBE2D3 (PubMed:21282530, PubMed:26151332). Interacts with RNF2; the interaction is direct (PubMed:26151332). Interacts with CBX6, CBX7 and CBX8 (PubMed:21282530). Interacts with AUTS2; the interaction is direct (PubMed:25519132). Identified in a complex that contains AUTS2, PCGF5, CSNK2B and RNF2 (PubMed:25519132).</text>
</comment>
<comment type="interaction">
    <interactant intactId="EBI-2827999">
        <id>Q86SE9</id>
    </interactant>
    <interactant intactId="EBI-2875359">
        <id>Q8WXX7</id>
        <label>AUTS2</label>
    </interactant>
    <organismsDiffer>false</organismsDiffer>
    <experiments>8</experiments>
</comment>
<comment type="interaction">
    <interactant intactId="EBI-2827999">
        <id>Q86SE9</id>
    </interactant>
    <interactant intactId="EBI-10208579">
        <id>Q6W2J9-4</id>
        <label>BCOR</label>
    </interactant>
    <organismsDiffer>false</organismsDiffer>
    <experiments>3</experiments>
</comment>
<comment type="interaction">
    <interactant intactId="EBI-2827999">
        <id>Q86SE9</id>
    </interactant>
    <interactant intactId="EBI-712912">
        <id>Q9HC52</id>
        <label>CBX8</label>
    </interactant>
    <organismsDiffer>false</organismsDiffer>
    <experiments>4</experiments>
</comment>
<comment type="interaction">
    <interactant intactId="EBI-2827999">
        <id>Q86SE9</id>
    </interactant>
    <interactant intactId="EBI-713786">
        <id>Q8IXK0</id>
        <label>PHC2</label>
    </interactant>
    <organismsDiffer>false</organismsDiffer>
    <experiments>3</experiments>
</comment>
<comment type="interaction">
    <interactant intactId="EBI-2827999">
        <id>Q86SE9</id>
    </interactant>
    <interactant intactId="EBI-912440">
        <id>Q96LA8</id>
        <label>PRMT6</label>
    </interactant>
    <organismsDiffer>false</organismsDiffer>
    <experiments>2</experiments>
</comment>
<comment type="interaction">
    <interactant intactId="EBI-2827999">
        <id>Q86SE9</id>
    </interactant>
    <interactant intactId="EBI-752313">
        <id>Q06587</id>
        <label>RING1</label>
    </interactant>
    <organismsDiffer>false</organismsDiffer>
    <experiments>10</experiments>
</comment>
<comment type="interaction">
    <interactant intactId="EBI-2827999">
        <id>Q86SE9</id>
    </interactant>
    <interactant intactId="EBI-722416">
        <id>Q99496</id>
        <label>RNF2</label>
    </interactant>
    <organismsDiffer>false</organismsDiffer>
    <experiments>11</experiments>
</comment>
<comment type="interaction">
    <interactant intactId="EBI-2827999">
        <id>Q86SE9</id>
    </interactant>
    <interactant intactId="EBI-355744">
        <id>Q12933</id>
        <label>TRAF2</label>
    </interactant>
    <organismsDiffer>false</organismsDiffer>
    <experiments>3</experiments>
</comment>
<comment type="interaction">
    <interactant intactId="EBI-2827999">
        <id>Q86SE9</id>
    </interactant>
    <interactant intactId="EBI-26585631">
        <id>Q2GHU2</id>
        <label>ECH_0166</label>
    </interactant>
    <organismsDiffer>true</organismsDiffer>
    <experiments>3</experiments>
</comment>
<comment type="interaction">
    <interactant intactId="EBI-25861637">
        <id>Q86SE9-2</id>
    </interactant>
    <interactant intactId="EBI-747754">
        <id>P28799</id>
        <label>GRN</label>
    </interactant>
    <organismsDiffer>false</organismsDiffer>
    <experiments>3</experiments>
</comment>
<comment type="subcellular location">
    <subcellularLocation>
        <location evidence="4 5">Nucleus</location>
    </subcellularLocation>
    <subcellularLocation>
        <location evidence="1">Nucleus</location>
        <location evidence="1">Nucleoplasm</location>
    </subcellularLocation>
    <text evidence="1">Recruited by the non-coding RNA Xist to specific nuclear foci that probably correspond to the inactivated X chromosome.</text>
</comment>
<comment type="alternative products">
    <event type="alternative splicing"/>
    <isoform>
        <id>Q86SE9-1</id>
        <name>1</name>
        <sequence type="displayed"/>
    </isoform>
    <isoform>
        <id>Q86SE9-2</id>
        <name>2</name>
        <sequence type="described" ref="VSP_023118 VSP_023119"/>
    </isoform>
</comment>
<evidence type="ECO:0000250" key="1">
    <source>
        <dbReference type="UniProtKB" id="Q3UK78"/>
    </source>
</evidence>
<evidence type="ECO:0000255" key="2">
    <source>
        <dbReference type="PROSITE-ProRule" id="PRU00175"/>
    </source>
</evidence>
<evidence type="ECO:0000256" key="3">
    <source>
        <dbReference type="SAM" id="MobiDB-lite"/>
    </source>
</evidence>
<evidence type="ECO:0000269" key="4">
    <source>
    </source>
</evidence>
<evidence type="ECO:0000269" key="5">
    <source>
    </source>
</evidence>
<evidence type="ECO:0000269" key="6">
    <source>
    </source>
</evidence>
<evidence type="ECO:0000303" key="7">
    <source>
    </source>
</evidence>
<evidence type="ECO:0007744" key="8">
    <source>
        <dbReference type="PDB" id="4S3O"/>
    </source>
</evidence>
<evidence type="ECO:0007829" key="9">
    <source>
        <dbReference type="PDB" id="4S3O"/>
    </source>
</evidence>
<keyword id="KW-0002">3D-structure</keyword>
<keyword id="KW-0025">Alternative splicing</keyword>
<keyword id="KW-0479">Metal-binding</keyword>
<keyword id="KW-0539">Nucleus</keyword>
<keyword id="KW-1267">Proteomics identification</keyword>
<keyword id="KW-1185">Reference proteome</keyword>
<keyword id="KW-0678">Repressor</keyword>
<keyword id="KW-0804">Transcription</keyword>
<keyword id="KW-0805">Transcription regulation</keyword>
<keyword id="KW-0862">Zinc</keyword>
<keyword id="KW-0863">Zinc-finger</keyword>
<reference key="1">
    <citation type="journal article" date="2004" name="Nat. Genet.">
        <title>Complete sequencing and characterization of 21,243 full-length human cDNAs.</title>
        <authorList>
            <person name="Ota T."/>
            <person name="Suzuki Y."/>
            <person name="Nishikawa T."/>
            <person name="Otsuki T."/>
            <person name="Sugiyama T."/>
            <person name="Irie R."/>
            <person name="Wakamatsu A."/>
            <person name="Hayashi K."/>
            <person name="Sato H."/>
            <person name="Nagai K."/>
            <person name="Kimura K."/>
            <person name="Makita H."/>
            <person name="Sekine M."/>
            <person name="Obayashi M."/>
            <person name="Nishi T."/>
            <person name="Shibahara T."/>
            <person name="Tanaka T."/>
            <person name="Ishii S."/>
            <person name="Yamamoto J."/>
            <person name="Saito K."/>
            <person name="Kawai Y."/>
            <person name="Isono Y."/>
            <person name="Nakamura Y."/>
            <person name="Nagahari K."/>
            <person name="Murakami K."/>
            <person name="Yasuda T."/>
            <person name="Iwayanagi T."/>
            <person name="Wagatsuma M."/>
            <person name="Shiratori A."/>
            <person name="Sudo H."/>
            <person name="Hosoiri T."/>
            <person name="Kaku Y."/>
            <person name="Kodaira H."/>
            <person name="Kondo H."/>
            <person name="Sugawara M."/>
            <person name="Takahashi M."/>
            <person name="Kanda K."/>
            <person name="Yokoi T."/>
            <person name="Furuya T."/>
            <person name="Kikkawa E."/>
            <person name="Omura Y."/>
            <person name="Abe K."/>
            <person name="Kamihara K."/>
            <person name="Katsuta N."/>
            <person name="Sato K."/>
            <person name="Tanikawa M."/>
            <person name="Yamazaki M."/>
            <person name="Ninomiya K."/>
            <person name="Ishibashi T."/>
            <person name="Yamashita H."/>
            <person name="Murakawa K."/>
            <person name="Fujimori K."/>
            <person name="Tanai H."/>
            <person name="Kimata M."/>
            <person name="Watanabe M."/>
            <person name="Hiraoka S."/>
            <person name="Chiba Y."/>
            <person name="Ishida S."/>
            <person name="Ono Y."/>
            <person name="Takiguchi S."/>
            <person name="Watanabe S."/>
            <person name="Yosida M."/>
            <person name="Hotuta T."/>
            <person name="Kusano J."/>
            <person name="Kanehori K."/>
            <person name="Takahashi-Fujii A."/>
            <person name="Hara H."/>
            <person name="Tanase T.-O."/>
            <person name="Nomura Y."/>
            <person name="Togiya S."/>
            <person name="Komai F."/>
            <person name="Hara R."/>
            <person name="Takeuchi K."/>
            <person name="Arita M."/>
            <person name="Imose N."/>
            <person name="Musashino K."/>
            <person name="Yuuki H."/>
            <person name="Oshima A."/>
            <person name="Sasaki N."/>
            <person name="Aotsuka S."/>
            <person name="Yoshikawa Y."/>
            <person name="Matsunawa H."/>
            <person name="Ichihara T."/>
            <person name="Shiohata N."/>
            <person name="Sano S."/>
            <person name="Moriya S."/>
            <person name="Momiyama H."/>
            <person name="Satoh N."/>
            <person name="Takami S."/>
            <person name="Terashima Y."/>
            <person name="Suzuki O."/>
            <person name="Nakagawa S."/>
            <person name="Senoh A."/>
            <person name="Mizoguchi H."/>
            <person name="Goto Y."/>
            <person name="Shimizu F."/>
            <person name="Wakebe H."/>
            <person name="Hishigaki H."/>
            <person name="Watanabe T."/>
            <person name="Sugiyama A."/>
            <person name="Takemoto M."/>
            <person name="Kawakami B."/>
            <person name="Yamazaki M."/>
            <person name="Watanabe K."/>
            <person name="Kumagai A."/>
            <person name="Itakura S."/>
            <person name="Fukuzumi Y."/>
            <person name="Fujimori Y."/>
            <person name="Komiyama M."/>
            <person name="Tashiro H."/>
            <person name="Tanigami A."/>
            <person name="Fujiwara T."/>
            <person name="Ono T."/>
            <person name="Yamada K."/>
            <person name="Fujii Y."/>
            <person name="Ozaki K."/>
            <person name="Hirao M."/>
            <person name="Ohmori Y."/>
            <person name="Kawabata A."/>
            <person name="Hikiji T."/>
            <person name="Kobatake N."/>
            <person name="Inagaki H."/>
            <person name="Ikema Y."/>
            <person name="Okamoto S."/>
            <person name="Okitani R."/>
            <person name="Kawakami T."/>
            <person name="Noguchi S."/>
            <person name="Itoh T."/>
            <person name="Shigeta K."/>
            <person name="Senba T."/>
            <person name="Matsumura K."/>
            <person name="Nakajima Y."/>
            <person name="Mizuno T."/>
            <person name="Morinaga M."/>
            <person name="Sasaki M."/>
            <person name="Togashi T."/>
            <person name="Oyama M."/>
            <person name="Hata H."/>
            <person name="Watanabe M."/>
            <person name="Komatsu T."/>
            <person name="Mizushima-Sugano J."/>
            <person name="Satoh T."/>
            <person name="Shirai Y."/>
            <person name="Takahashi Y."/>
            <person name="Nakagawa K."/>
            <person name="Okumura K."/>
            <person name="Nagase T."/>
            <person name="Nomura N."/>
            <person name="Kikuchi H."/>
            <person name="Masuho Y."/>
            <person name="Yamashita R."/>
            <person name="Nakai K."/>
            <person name="Yada T."/>
            <person name="Nakamura Y."/>
            <person name="Ohara O."/>
            <person name="Isogai T."/>
            <person name="Sugano S."/>
        </authorList>
    </citation>
    <scope>NUCLEOTIDE SEQUENCE [LARGE SCALE MRNA] (ISOFORM 1)</scope>
    <source>
        <tissue>Testis</tissue>
    </source>
</reference>
<reference key="2">
    <citation type="journal article" date="2007" name="BMC Genomics">
        <title>The full-ORF clone resource of the German cDNA consortium.</title>
        <authorList>
            <person name="Bechtel S."/>
            <person name="Rosenfelder H."/>
            <person name="Duda A."/>
            <person name="Schmidt C.P."/>
            <person name="Ernst U."/>
            <person name="Wellenreuther R."/>
            <person name="Mehrle A."/>
            <person name="Schuster C."/>
            <person name="Bahr A."/>
            <person name="Bloecker H."/>
            <person name="Heubner D."/>
            <person name="Hoerlein A."/>
            <person name="Michel G."/>
            <person name="Wedler H."/>
            <person name="Koehrer K."/>
            <person name="Ottenwaelder B."/>
            <person name="Poustka A."/>
            <person name="Wiemann S."/>
            <person name="Schupp I."/>
        </authorList>
    </citation>
    <scope>NUCLEOTIDE SEQUENCE [LARGE SCALE MRNA] (ISOFORM 1)</scope>
    <source>
        <tissue>Endometrial adenocarcinoma</tissue>
        <tissue>Skeletal muscle</tissue>
    </source>
</reference>
<reference key="3">
    <citation type="submission" date="2005-09" db="EMBL/GenBank/DDBJ databases">
        <authorList>
            <person name="Mural R.J."/>
            <person name="Istrail S."/>
            <person name="Sutton G.G."/>
            <person name="Florea L."/>
            <person name="Halpern A.L."/>
            <person name="Mobarry C.M."/>
            <person name="Lippert R."/>
            <person name="Walenz B."/>
            <person name="Shatkay H."/>
            <person name="Dew I."/>
            <person name="Miller J.R."/>
            <person name="Flanigan M.J."/>
            <person name="Edwards N.J."/>
            <person name="Bolanos R."/>
            <person name="Fasulo D."/>
            <person name="Halldorsson B.V."/>
            <person name="Hannenhalli S."/>
            <person name="Turner R."/>
            <person name="Yooseph S."/>
            <person name="Lu F."/>
            <person name="Nusskern D.R."/>
            <person name="Shue B.C."/>
            <person name="Zheng X.H."/>
            <person name="Zhong F."/>
            <person name="Delcher A.L."/>
            <person name="Huson D.H."/>
            <person name="Kravitz S.A."/>
            <person name="Mouchard L."/>
            <person name="Reinert K."/>
            <person name="Remington K.A."/>
            <person name="Clark A.G."/>
            <person name="Waterman M.S."/>
            <person name="Eichler E.E."/>
            <person name="Adams M.D."/>
            <person name="Hunkapiller M.W."/>
            <person name="Myers E.W."/>
            <person name="Venter J.C."/>
        </authorList>
    </citation>
    <scope>NUCLEOTIDE SEQUENCE [LARGE SCALE GENOMIC DNA]</scope>
</reference>
<reference key="4">
    <citation type="journal article" date="2004" name="Genome Res.">
        <title>The status, quality, and expansion of the NIH full-length cDNA project: the Mammalian Gene Collection (MGC).</title>
        <authorList>
            <consortium name="The MGC Project Team"/>
        </authorList>
    </citation>
    <scope>NUCLEOTIDE SEQUENCE [LARGE SCALE MRNA] (ISOFORMS 1 AND 2)</scope>
    <source>
        <tissue>Brain</tissue>
        <tissue>Pancreas</tissue>
    </source>
</reference>
<reference key="5">
    <citation type="journal article" date="2011" name="Mol. Cell. Proteomics">
        <title>Interaction proteomics analysis of polycomb proteins defines distinct PRC1 Complexes in mammalian cells.</title>
        <authorList>
            <person name="Vandamme J."/>
            <person name="Volkel P."/>
            <person name="Rosnoblet C."/>
            <person name="Le Faou P."/>
            <person name="Angrand P.O."/>
        </authorList>
    </citation>
    <scope>IDENTIFICATION IN A PRC1-LIKE COMPLEX</scope>
    <scope>INTERACTION WITH CBX6; CBX7 AND CBX8</scope>
    <scope>SUBCELLULAR LOCATION</scope>
</reference>
<reference key="6">
    <citation type="journal article" date="2014" name="Nature">
        <title>An AUTS2-polycomb complex activates gene expression in the CNS.</title>
        <authorList>
            <person name="Gao Z."/>
            <person name="Lee P."/>
            <person name="Stafford J.M."/>
            <person name="von Schimmelmann M."/>
            <person name="Schaefer A."/>
            <person name="Reinberg D."/>
        </authorList>
    </citation>
    <scope>IDENTIFICATION IN A COMPLEX WITH AUTS2; RNF2; CSNK2B AND RYBP</scope>
    <scope>SUBCELLULAR LOCATION</scope>
</reference>
<reference evidence="8" key="7">
    <citation type="journal article" date="2015" name="Nat. Commun.">
        <title>BMI1-RING1B is an autoinhibited RING E3 ubiquitin ligase.</title>
        <authorList>
            <person name="Taherbhoy A.M."/>
            <person name="Huang O.W."/>
            <person name="Cochran A.G."/>
        </authorList>
    </citation>
    <scope>X-RAY CRYSTALLOGRAPHY (2.00 ANGSTROMS) OF 1-109 IN COMPLEX WITH ZINC IONS; UBE2D3 AND RNF2</scope>
    <scope>SUBUNIT</scope>
    <scope>FUNCTION</scope>
</reference>
<accession>Q86SE9</accession>
<accession>B7Z892</accession>
<accession>D3DR33</accession>
<accession>Q6PK47</accession>
<accession>Q86TD0</accession>
<name>PCGF5_HUMAN</name>
<feature type="chain" id="PRO_0000277868" description="Polycomb group RING finger protein 5">
    <location>
        <begin position="1"/>
        <end position="256"/>
    </location>
</feature>
<feature type="zinc finger region" description="RING-type" evidence="2 6">
    <location>
        <begin position="18"/>
        <end position="57"/>
    </location>
</feature>
<feature type="region of interest" description="Disordered" evidence="3">
    <location>
        <begin position="94"/>
        <end position="133"/>
    </location>
</feature>
<feature type="compositionally biased region" description="Basic and acidic residues" evidence="3">
    <location>
        <begin position="94"/>
        <end position="103"/>
    </location>
</feature>
<feature type="compositionally biased region" description="Basic and acidic residues" evidence="3">
    <location>
        <begin position="110"/>
        <end position="120"/>
    </location>
</feature>
<feature type="splice variant" id="VSP_023118" description="In isoform 2." evidence="7">
    <original>FCKTCIVQHFED</original>
    <variation>SAESYWMSTWMS</variation>
    <location>
        <begin position="38"/>
        <end position="49"/>
    </location>
</feature>
<feature type="splice variant" id="VSP_023119" description="In isoform 2." evidence="7">
    <location>
        <begin position="50"/>
        <end position="256"/>
    </location>
</feature>
<feature type="helix" evidence="9">
    <location>
        <begin position="9"/>
        <end position="12"/>
    </location>
</feature>
<feature type="helix" evidence="9">
    <location>
        <begin position="13"/>
        <end position="16"/>
    </location>
</feature>
<feature type="turn" evidence="9">
    <location>
        <begin position="19"/>
        <end position="21"/>
    </location>
</feature>
<feature type="strand" evidence="9">
    <location>
        <begin position="22"/>
        <end position="24"/>
    </location>
</feature>
<feature type="strand" evidence="9">
    <location>
        <begin position="26"/>
        <end position="31"/>
    </location>
</feature>
<feature type="turn" evidence="9">
    <location>
        <begin position="32"/>
        <end position="35"/>
    </location>
</feature>
<feature type="strand" evidence="9">
    <location>
        <begin position="36"/>
        <end position="39"/>
    </location>
</feature>
<feature type="helix" evidence="9">
    <location>
        <begin position="40"/>
        <end position="46"/>
    </location>
</feature>
<feature type="turn" evidence="9">
    <location>
        <begin position="47"/>
        <end position="49"/>
    </location>
</feature>
<feature type="turn" evidence="9">
    <location>
        <begin position="54"/>
        <end position="56"/>
    </location>
</feature>
<feature type="helix" evidence="9">
    <location>
        <begin position="65"/>
        <end position="68"/>
    </location>
</feature>
<feature type="strand" evidence="9">
    <location>
        <begin position="69"/>
        <end position="71"/>
    </location>
</feature>
<feature type="helix" evidence="9">
    <location>
        <begin position="73"/>
        <end position="82"/>
    </location>
</feature>
<feature type="helix" evidence="9">
    <location>
        <begin position="86"/>
        <end position="98"/>
    </location>
</feature>
<gene>
    <name type="primary">PCGF5</name>
    <name type="synonym">RNF159</name>
</gene>
<organism>
    <name type="scientific">Homo sapiens</name>
    <name type="common">Human</name>
    <dbReference type="NCBI Taxonomy" id="9606"/>
    <lineage>
        <taxon>Eukaryota</taxon>
        <taxon>Metazoa</taxon>
        <taxon>Chordata</taxon>
        <taxon>Craniata</taxon>
        <taxon>Vertebrata</taxon>
        <taxon>Euteleostomi</taxon>
        <taxon>Mammalia</taxon>
        <taxon>Eutheria</taxon>
        <taxon>Euarchontoglires</taxon>
        <taxon>Primates</taxon>
        <taxon>Haplorrhini</taxon>
        <taxon>Catarrhini</taxon>
        <taxon>Hominidae</taxon>
        <taxon>Homo</taxon>
    </lineage>
</organism>
<proteinExistence type="evidence at protein level"/>